<keyword id="KW-0002">3D-structure</keyword>
<keyword id="KW-0963">Cytoplasm</keyword>
<keyword id="KW-0413">Isomerase</keyword>
<keyword id="KW-0479">Metal-binding</keyword>
<keyword id="KW-1185">Reference proteome</keyword>
<keyword id="KW-0862">Zinc</keyword>
<proteinExistence type="evidence at protein level"/>
<accession>P25081</accession>
<comment type="function">
    <text>Involved in the conversion of glucose to GDP-L-fucose, which can be converted to L-fucose, a capsular polysaccharide.</text>
</comment>
<comment type="catalytic activity">
    <reaction>
        <text>D-mannose 6-phosphate = D-fructose 6-phosphate</text>
        <dbReference type="Rhea" id="RHEA:12356"/>
        <dbReference type="ChEBI" id="CHEBI:58735"/>
        <dbReference type="ChEBI" id="CHEBI:61527"/>
        <dbReference type="EC" id="5.3.1.8"/>
    </reaction>
</comment>
<comment type="cofactor">
    <cofactor evidence="1">
        <name>Zn(2+)</name>
        <dbReference type="ChEBI" id="CHEBI:29105"/>
    </cofactor>
    <text evidence="1">Binds 1 zinc ion per subunit.</text>
</comment>
<comment type="subcellular location">
    <subcellularLocation>
        <location evidence="2">Cytoplasm</location>
    </subcellularLocation>
</comment>
<comment type="similarity">
    <text evidence="2">Belongs to the mannose-6-phosphate isomerase type 1 family.</text>
</comment>
<name>MANA_SALTY</name>
<gene>
    <name type="primary">manA</name>
    <name type="synonym">pmi</name>
    <name type="ordered locus">STM1467</name>
</gene>
<sequence length="391" mass="42591">MQKLINSVQNYAWGSKTALTELYGIANPQQQPMAELWMGAHPKSSSRITTANGETVSLRDAIEKNKTAMLGEAVANRFGELPFLFKVLCAAQPLSIQVHPNKRNSEIGFAKENAAGIPMDAAERNYKDPNHKPELVFALTPFLAMNAFREFSDIVSLLQPVAGAHSAIAHFLQVPNAERLSQLFASLLNMQGEEKSRALAVLKAALNSQQGEPWQTIRVISEYYPDDSGLFSPLLLNVVKLNPGEAMFLFAETPHAYLQGVALEVMANSDNVLRAGLTPKYIDIPELVANVKFEPKPAGELLTAPVKSGAELDFPIPVDDFAFSLHDLALQETSIGQHSAAILFCVEGEAVLRKDEQRLVLKPGESAFIGADESPVNASGTGRLARVYNKL</sequence>
<protein>
    <recommendedName>
        <fullName>Mannose-6-phosphate isomerase</fullName>
        <ecNumber>5.3.1.8</ecNumber>
    </recommendedName>
    <alternativeName>
        <fullName>Phosphohexomutase</fullName>
    </alternativeName>
    <alternativeName>
        <fullName>Phosphomannose isomerase</fullName>
        <shortName>PMI</shortName>
    </alternativeName>
</protein>
<dbReference type="EC" id="5.3.1.8"/>
<dbReference type="EMBL" id="X57117">
    <property type="protein sequence ID" value="CAA40399.1"/>
    <property type="molecule type" value="Genomic_DNA"/>
</dbReference>
<dbReference type="EMBL" id="AE006468">
    <property type="protein sequence ID" value="AAL20387.1"/>
    <property type="molecule type" value="Genomic_DNA"/>
</dbReference>
<dbReference type="PIR" id="JQ1192">
    <property type="entry name" value="JQ1192"/>
</dbReference>
<dbReference type="RefSeq" id="NP_460428.1">
    <property type="nucleotide sequence ID" value="NC_003197.2"/>
</dbReference>
<dbReference type="RefSeq" id="WP_001170627.1">
    <property type="nucleotide sequence ID" value="NC_003197.2"/>
</dbReference>
<dbReference type="PDB" id="2WFP">
    <property type="method" value="X-ray"/>
    <property type="resolution" value="1.67 A"/>
    <property type="chains" value="A=1-391"/>
</dbReference>
<dbReference type="PDB" id="3H1M">
    <property type="method" value="X-ray"/>
    <property type="resolution" value="2.50 A"/>
    <property type="chains" value="A=1-391"/>
</dbReference>
<dbReference type="PDB" id="3H1W">
    <property type="method" value="X-ray"/>
    <property type="resolution" value="1.94 A"/>
    <property type="chains" value="A=1-391"/>
</dbReference>
<dbReference type="PDB" id="3H1Y">
    <property type="method" value="X-ray"/>
    <property type="resolution" value="2.04 A"/>
    <property type="chains" value="A=1-391"/>
</dbReference>
<dbReference type="PDB" id="5ZT4">
    <property type="method" value="X-ray"/>
    <property type="resolution" value="1.70 A"/>
    <property type="chains" value="A=1-391"/>
</dbReference>
<dbReference type="PDB" id="5ZT5">
    <property type="method" value="X-ray"/>
    <property type="resolution" value="1.90 A"/>
    <property type="chains" value="A=1-391"/>
</dbReference>
<dbReference type="PDB" id="5ZT6">
    <property type="method" value="X-ray"/>
    <property type="resolution" value="2.50 A"/>
    <property type="chains" value="A=1-391"/>
</dbReference>
<dbReference type="PDB" id="5ZUW">
    <property type="method" value="X-ray"/>
    <property type="resolution" value="2.10 A"/>
    <property type="chains" value="A=1-391"/>
</dbReference>
<dbReference type="PDB" id="5ZUY">
    <property type="method" value="X-ray"/>
    <property type="resolution" value="2.00 A"/>
    <property type="chains" value="A=1-391"/>
</dbReference>
<dbReference type="PDB" id="5ZV0">
    <property type="method" value="X-ray"/>
    <property type="resolution" value="2.10 A"/>
    <property type="chains" value="A=1-391"/>
</dbReference>
<dbReference type="PDB" id="5ZVR">
    <property type="method" value="X-ray"/>
    <property type="resolution" value="1.93 A"/>
    <property type="chains" value="A=1-391"/>
</dbReference>
<dbReference type="PDB" id="5ZVU">
    <property type="method" value="X-ray"/>
    <property type="resolution" value="2.20 A"/>
    <property type="chains" value="A=1-391"/>
</dbReference>
<dbReference type="PDB" id="5ZVX">
    <property type="method" value="X-ray"/>
    <property type="resolution" value="1.70 A"/>
    <property type="chains" value="A=1-391"/>
</dbReference>
<dbReference type="PDBsum" id="2WFP"/>
<dbReference type="PDBsum" id="3H1M"/>
<dbReference type="PDBsum" id="3H1W"/>
<dbReference type="PDBsum" id="3H1Y"/>
<dbReference type="PDBsum" id="5ZT4"/>
<dbReference type="PDBsum" id="5ZT5"/>
<dbReference type="PDBsum" id="5ZT6"/>
<dbReference type="PDBsum" id="5ZUW"/>
<dbReference type="PDBsum" id="5ZUY"/>
<dbReference type="PDBsum" id="5ZV0"/>
<dbReference type="PDBsum" id="5ZVR"/>
<dbReference type="PDBsum" id="5ZVU"/>
<dbReference type="PDBsum" id="5ZVX"/>
<dbReference type="SMR" id="P25081"/>
<dbReference type="STRING" id="99287.STM1467"/>
<dbReference type="PaxDb" id="99287-STM1467"/>
<dbReference type="GeneID" id="1252985"/>
<dbReference type="KEGG" id="stm:STM1467"/>
<dbReference type="PATRIC" id="fig|99287.12.peg.1549"/>
<dbReference type="HOGENOM" id="CLU_026967_1_0_6"/>
<dbReference type="OMA" id="DIGLFCG"/>
<dbReference type="PhylomeDB" id="P25081"/>
<dbReference type="BioCyc" id="SENT99287:STM1467-MONOMER"/>
<dbReference type="BRENDA" id="5.3.1.8">
    <property type="organism ID" value="5542"/>
</dbReference>
<dbReference type="EvolutionaryTrace" id="P25081"/>
<dbReference type="PHI-base" id="PHI:8136"/>
<dbReference type="Proteomes" id="UP000001014">
    <property type="component" value="Chromosome"/>
</dbReference>
<dbReference type="GO" id="GO:0005829">
    <property type="term" value="C:cytosol"/>
    <property type="evidence" value="ECO:0000318"/>
    <property type="project" value="GO_Central"/>
</dbReference>
<dbReference type="GO" id="GO:0004476">
    <property type="term" value="F:mannose-6-phosphate isomerase activity"/>
    <property type="evidence" value="ECO:0000318"/>
    <property type="project" value="GO_Central"/>
</dbReference>
<dbReference type="GO" id="GO:0008270">
    <property type="term" value="F:zinc ion binding"/>
    <property type="evidence" value="ECO:0007669"/>
    <property type="project" value="InterPro"/>
</dbReference>
<dbReference type="GO" id="GO:0005975">
    <property type="term" value="P:carbohydrate metabolic process"/>
    <property type="evidence" value="ECO:0007669"/>
    <property type="project" value="InterPro"/>
</dbReference>
<dbReference type="GO" id="GO:0009298">
    <property type="term" value="P:GDP-mannose biosynthetic process"/>
    <property type="evidence" value="ECO:0000318"/>
    <property type="project" value="GO_Central"/>
</dbReference>
<dbReference type="CDD" id="cd07011">
    <property type="entry name" value="cupin_PMI_type_I_N"/>
    <property type="match status" value="1"/>
</dbReference>
<dbReference type="FunFam" id="2.60.120.10:FF:000030">
    <property type="entry name" value="Mannose-6-phosphate isomerase ManA"/>
    <property type="match status" value="1"/>
</dbReference>
<dbReference type="Gene3D" id="2.60.120.10">
    <property type="entry name" value="Jelly Rolls"/>
    <property type="match status" value="2"/>
</dbReference>
<dbReference type="Gene3D" id="1.10.441.10">
    <property type="entry name" value="Phosphomannose Isomerase, domain 2"/>
    <property type="match status" value="1"/>
</dbReference>
<dbReference type="InterPro" id="IPR001250">
    <property type="entry name" value="Man6P_Isoase-1"/>
</dbReference>
<dbReference type="InterPro" id="IPR016305">
    <property type="entry name" value="Mannose-6-P_Isomerase"/>
</dbReference>
<dbReference type="InterPro" id="IPR049071">
    <property type="entry name" value="MPI_cupin_dom"/>
</dbReference>
<dbReference type="InterPro" id="IPR018050">
    <property type="entry name" value="Pmannose_isomerase-type1_CS"/>
</dbReference>
<dbReference type="InterPro" id="IPR046457">
    <property type="entry name" value="PMI_typeI_cat"/>
</dbReference>
<dbReference type="InterPro" id="IPR046458">
    <property type="entry name" value="PMI_typeI_hel"/>
</dbReference>
<dbReference type="InterPro" id="IPR014710">
    <property type="entry name" value="RmlC-like_jellyroll"/>
</dbReference>
<dbReference type="InterPro" id="IPR011051">
    <property type="entry name" value="RmlC_Cupin_sf"/>
</dbReference>
<dbReference type="NCBIfam" id="TIGR00218">
    <property type="entry name" value="manA"/>
    <property type="match status" value="1"/>
</dbReference>
<dbReference type="NCBIfam" id="NF011710">
    <property type="entry name" value="PRK15131.1"/>
    <property type="match status" value="1"/>
</dbReference>
<dbReference type="PANTHER" id="PTHR10309">
    <property type="entry name" value="MANNOSE-6-PHOSPHATE ISOMERASE"/>
    <property type="match status" value="1"/>
</dbReference>
<dbReference type="PANTHER" id="PTHR10309:SF0">
    <property type="entry name" value="MANNOSE-6-PHOSPHATE ISOMERASE"/>
    <property type="match status" value="1"/>
</dbReference>
<dbReference type="Pfam" id="PF21621">
    <property type="entry name" value="MPI_cupin_dom"/>
    <property type="match status" value="1"/>
</dbReference>
<dbReference type="Pfam" id="PF20511">
    <property type="entry name" value="PMI_typeI_cat"/>
    <property type="match status" value="1"/>
</dbReference>
<dbReference type="Pfam" id="PF20512">
    <property type="entry name" value="PMI_typeI_hel"/>
    <property type="match status" value="1"/>
</dbReference>
<dbReference type="PIRSF" id="PIRSF001480">
    <property type="entry name" value="Mannose-6-phosphate_isomerase"/>
    <property type="match status" value="1"/>
</dbReference>
<dbReference type="PRINTS" id="PR00714">
    <property type="entry name" value="MAN6PISMRASE"/>
</dbReference>
<dbReference type="SUPFAM" id="SSF51182">
    <property type="entry name" value="RmlC-like cupins"/>
    <property type="match status" value="1"/>
</dbReference>
<dbReference type="PROSITE" id="PS00965">
    <property type="entry name" value="PMI_I_1"/>
    <property type="match status" value="1"/>
</dbReference>
<dbReference type="PROSITE" id="PS00966">
    <property type="entry name" value="PMI_I_2"/>
    <property type="match status" value="1"/>
</dbReference>
<reference key="1">
    <citation type="journal article" date="1991" name="Gene">
        <title>Sequence of the phosphomannose isomerase-encoding gene of Salmonella typhimurium.</title>
        <authorList>
            <person name="Collins L.V."/>
            <person name="Hackett J."/>
        </authorList>
    </citation>
    <scope>NUCLEOTIDE SEQUENCE [GENOMIC DNA]</scope>
    <source>
        <strain>C5</strain>
    </source>
</reference>
<reference key="2">
    <citation type="journal article" date="2001" name="Nature">
        <title>Complete genome sequence of Salmonella enterica serovar Typhimurium LT2.</title>
        <authorList>
            <person name="McClelland M."/>
            <person name="Sanderson K.E."/>
            <person name="Spieth J."/>
            <person name="Clifton S.W."/>
            <person name="Latreille P."/>
            <person name="Courtney L."/>
            <person name="Porwollik S."/>
            <person name="Ali J."/>
            <person name="Dante M."/>
            <person name="Du F."/>
            <person name="Hou S."/>
            <person name="Layman D."/>
            <person name="Leonard S."/>
            <person name="Nguyen C."/>
            <person name="Scott K."/>
            <person name="Holmes A."/>
            <person name="Grewal N."/>
            <person name="Mulvaney E."/>
            <person name="Ryan E."/>
            <person name="Sun H."/>
            <person name="Florea L."/>
            <person name="Miller W."/>
            <person name="Stoneking T."/>
            <person name="Nhan M."/>
            <person name="Waterston R."/>
            <person name="Wilson R.K."/>
        </authorList>
    </citation>
    <scope>NUCLEOTIDE SEQUENCE [LARGE SCALE GENOMIC DNA]</scope>
    <source>
        <strain>LT2 / SGSC1412 / ATCC 700720</strain>
    </source>
</reference>
<organism>
    <name type="scientific">Salmonella typhimurium (strain LT2 / SGSC1412 / ATCC 700720)</name>
    <dbReference type="NCBI Taxonomy" id="99287"/>
    <lineage>
        <taxon>Bacteria</taxon>
        <taxon>Pseudomonadati</taxon>
        <taxon>Pseudomonadota</taxon>
        <taxon>Gammaproteobacteria</taxon>
        <taxon>Enterobacterales</taxon>
        <taxon>Enterobacteriaceae</taxon>
        <taxon>Salmonella</taxon>
    </lineage>
</organism>
<evidence type="ECO:0000250" key="1"/>
<evidence type="ECO:0000305" key="2"/>
<evidence type="ECO:0007829" key="3">
    <source>
        <dbReference type="PDB" id="2WFP"/>
    </source>
</evidence>
<evidence type="ECO:0007829" key="4">
    <source>
        <dbReference type="PDB" id="5ZT4"/>
    </source>
</evidence>
<evidence type="ECO:0007829" key="5">
    <source>
        <dbReference type="PDB" id="5ZT5"/>
    </source>
</evidence>
<evidence type="ECO:0007829" key="6">
    <source>
        <dbReference type="PDB" id="5ZUY"/>
    </source>
</evidence>
<evidence type="ECO:0007829" key="7">
    <source>
        <dbReference type="PDB" id="5ZVU"/>
    </source>
</evidence>
<feature type="chain" id="PRO_0000194231" description="Mannose-6-phosphate isomerase">
    <location>
        <begin position="1"/>
        <end position="391"/>
    </location>
</feature>
<feature type="active site" evidence="1">
    <location>
        <position position="274"/>
    </location>
</feature>
<feature type="binding site" evidence="1">
    <location>
        <position position="97"/>
    </location>
    <ligand>
        <name>Zn(2+)</name>
        <dbReference type="ChEBI" id="CHEBI:29105"/>
    </ligand>
</feature>
<feature type="binding site" evidence="1">
    <location>
        <position position="99"/>
    </location>
    <ligand>
        <name>Zn(2+)</name>
        <dbReference type="ChEBI" id="CHEBI:29105"/>
    </ligand>
</feature>
<feature type="binding site" evidence="1">
    <location>
        <position position="134"/>
    </location>
    <ligand>
        <name>Zn(2+)</name>
        <dbReference type="ChEBI" id="CHEBI:29105"/>
    </ligand>
</feature>
<feature type="binding site" evidence="1">
    <location>
        <position position="255"/>
    </location>
    <ligand>
        <name>Zn(2+)</name>
        <dbReference type="ChEBI" id="CHEBI:29105"/>
    </ligand>
</feature>
<feature type="sequence conflict" description="In Ref. 1; CAA40399." evidence="2" ref="1">
    <original>Q</original>
    <variation>K</variation>
    <location>
        <position position="92"/>
    </location>
</feature>
<feature type="strand" evidence="3">
    <location>
        <begin position="1"/>
        <end position="3"/>
    </location>
</feature>
<feature type="strand" evidence="3">
    <location>
        <begin position="7"/>
        <end position="9"/>
    </location>
</feature>
<feature type="strand" evidence="3">
    <location>
        <begin position="14"/>
        <end position="17"/>
    </location>
</feature>
<feature type="helix" evidence="3">
    <location>
        <begin position="18"/>
        <end position="23"/>
    </location>
</feature>
<feature type="strand" evidence="3">
    <location>
        <begin position="35"/>
        <end position="39"/>
    </location>
</feature>
<feature type="strand" evidence="6">
    <location>
        <begin position="42"/>
        <end position="44"/>
    </location>
</feature>
<feature type="strand" evidence="4">
    <location>
        <begin position="47"/>
        <end position="49"/>
    </location>
</feature>
<feature type="strand" evidence="4">
    <location>
        <begin position="55"/>
        <end position="57"/>
    </location>
</feature>
<feature type="helix" evidence="3">
    <location>
        <begin position="58"/>
        <end position="64"/>
    </location>
</feature>
<feature type="helix" evidence="3">
    <location>
        <begin position="66"/>
        <end position="70"/>
    </location>
</feature>
<feature type="helix" evidence="3">
    <location>
        <begin position="72"/>
        <end position="77"/>
    </location>
</feature>
<feature type="strand" evidence="3">
    <location>
        <begin position="84"/>
        <end position="92"/>
    </location>
</feature>
<feature type="strand" evidence="7">
    <location>
        <begin position="96"/>
        <end position="98"/>
    </location>
</feature>
<feature type="helix" evidence="3">
    <location>
        <begin position="102"/>
        <end position="114"/>
    </location>
</feature>
<feature type="strand" evidence="5">
    <location>
        <begin position="119"/>
        <end position="121"/>
    </location>
</feature>
<feature type="strand" evidence="4">
    <location>
        <begin position="127"/>
        <end position="129"/>
    </location>
</feature>
<feature type="strand" evidence="3">
    <location>
        <begin position="134"/>
        <end position="140"/>
    </location>
</feature>
<feature type="strand" evidence="3">
    <location>
        <begin position="142"/>
        <end position="148"/>
    </location>
</feature>
<feature type="helix" evidence="3">
    <location>
        <begin position="151"/>
        <end position="158"/>
    </location>
</feature>
<feature type="helix" evidence="3">
    <location>
        <begin position="159"/>
        <end position="164"/>
    </location>
</feature>
<feature type="helix" evidence="3">
    <location>
        <begin position="166"/>
        <end position="173"/>
    </location>
</feature>
<feature type="helix" evidence="3">
    <location>
        <begin position="177"/>
        <end position="188"/>
    </location>
</feature>
<feature type="helix" evidence="3">
    <location>
        <begin position="192"/>
        <end position="208"/>
    </location>
</feature>
<feature type="helix" evidence="3">
    <location>
        <begin position="214"/>
        <end position="223"/>
    </location>
</feature>
<feature type="helix" evidence="3">
    <location>
        <begin position="228"/>
        <end position="231"/>
    </location>
</feature>
<feature type="helix" evidence="3">
    <location>
        <begin position="232"/>
        <end position="235"/>
    </location>
</feature>
<feature type="strand" evidence="3">
    <location>
        <begin position="236"/>
        <end position="241"/>
    </location>
</feature>
<feature type="strand" evidence="3">
    <location>
        <begin position="246"/>
        <end position="249"/>
    </location>
</feature>
<feature type="strand" evidence="3">
    <location>
        <begin position="255"/>
        <end position="266"/>
    </location>
</feature>
<feature type="strand" evidence="4">
    <location>
        <begin position="276"/>
        <end position="280"/>
    </location>
</feature>
<feature type="helix" evidence="3">
    <location>
        <begin position="284"/>
        <end position="289"/>
    </location>
</feature>
<feature type="helix" evidence="3">
    <location>
        <begin position="298"/>
        <end position="300"/>
    </location>
</feature>
<feature type="strand" evidence="3">
    <location>
        <begin position="306"/>
        <end position="308"/>
    </location>
</feature>
<feature type="strand" evidence="3">
    <location>
        <begin position="311"/>
        <end position="313"/>
    </location>
</feature>
<feature type="strand" evidence="3">
    <location>
        <begin position="317"/>
        <end position="320"/>
    </location>
</feature>
<feature type="strand" evidence="3">
    <location>
        <begin position="322"/>
        <end position="327"/>
    </location>
</feature>
<feature type="strand" evidence="3">
    <location>
        <begin position="333"/>
        <end position="335"/>
    </location>
</feature>
<feature type="strand" evidence="3">
    <location>
        <begin position="341"/>
        <end position="354"/>
    </location>
</feature>
<feature type="strand" evidence="3">
    <location>
        <begin position="357"/>
        <end position="361"/>
    </location>
</feature>
<feature type="strand" evidence="3">
    <location>
        <begin position="366"/>
        <end position="369"/>
    </location>
</feature>
<feature type="helix" evidence="3">
    <location>
        <begin position="371"/>
        <end position="373"/>
    </location>
</feature>
<feature type="strand" evidence="3">
    <location>
        <begin position="376"/>
        <end position="388"/>
    </location>
</feature>